<organism>
    <name type="scientific">Nitrobacter winogradskyi (strain ATCC 25391 / DSM 10237 / CIP 104748 / NCIMB 11846 / Nb-255)</name>
    <dbReference type="NCBI Taxonomy" id="323098"/>
    <lineage>
        <taxon>Bacteria</taxon>
        <taxon>Pseudomonadati</taxon>
        <taxon>Pseudomonadota</taxon>
        <taxon>Alphaproteobacteria</taxon>
        <taxon>Hyphomicrobiales</taxon>
        <taxon>Nitrobacteraceae</taxon>
        <taxon>Nitrobacter</taxon>
    </lineage>
</organism>
<dbReference type="EC" id="6.3.3.1" evidence="1"/>
<dbReference type="EMBL" id="CP000115">
    <property type="protein sequence ID" value="ABA04858.1"/>
    <property type="molecule type" value="Genomic_DNA"/>
</dbReference>
<dbReference type="RefSeq" id="WP_011314862.1">
    <property type="nucleotide sequence ID" value="NC_007406.1"/>
</dbReference>
<dbReference type="SMR" id="Q3SS83"/>
<dbReference type="STRING" id="323098.Nwi_1597"/>
<dbReference type="KEGG" id="nwi:Nwi_1597"/>
<dbReference type="eggNOG" id="COG0150">
    <property type="taxonomic scope" value="Bacteria"/>
</dbReference>
<dbReference type="HOGENOM" id="CLU_047116_0_0_5"/>
<dbReference type="OrthoDB" id="9777881at2"/>
<dbReference type="UniPathway" id="UPA00074">
    <property type="reaction ID" value="UER00129"/>
</dbReference>
<dbReference type="Proteomes" id="UP000002531">
    <property type="component" value="Chromosome"/>
</dbReference>
<dbReference type="GO" id="GO:0005829">
    <property type="term" value="C:cytosol"/>
    <property type="evidence" value="ECO:0007669"/>
    <property type="project" value="TreeGrafter"/>
</dbReference>
<dbReference type="GO" id="GO:0005524">
    <property type="term" value="F:ATP binding"/>
    <property type="evidence" value="ECO:0007669"/>
    <property type="project" value="UniProtKB-KW"/>
</dbReference>
<dbReference type="GO" id="GO:0004637">
    <property type="term" value="F:phosphoribosylamine-glycine ligase activity"/>
    <property type="evidence" value="ECO:0007669"/>
    <property type="project" value="TreeGrafter"/>
</dbReference>
<dbReference type="GO" id="GO:0004641">
    <property type="term" value="F:phosphoribosylformylglycinamidine cyclo-ligase activity"/>
    <property type="evidence" value="ECO:0007669"/>
    <property type="project" value="UniProtKB-UniRule"/>
</dbReference>
<dbReference type="GO" id="GO:0006189">
    <property type="term" value="P:'de novo' IMP biosynthetic process"/>
    <property type="evidence" value="ECO:0007669"/>
    <property type="project" value="UniProtKB-UniRule"/>
</dbReference>
<dbReference type="GO" id="GO:0046084">
    <property type="term" value="P:adenine biosynthetic process"/>
    <property type="evidence" value="ECO:0007669"/>
    <property type="project" value="TreeGrafter"/>
</dbReference>
<dbReference type="CDD" id="cd02196">
    <property type="entry name" value="PurM"/>
    <property type="match status" value="1"/>
</dbReference>
<dbReference type="FunFam" id="3.30.1330.10:FF:000001">
    <property type="entry name" value="Phosphoribosylformylglycinamidine cyclo-ligase"/>
    <property type="match status" value="1"/>
</dbReference>
<dbReference type="FunFam" id="3.90.650.10:FF:000001">
    <property type="entry name" value="Phosphoribosylformylglycinamidine cyclo-ligase"/>
    <property type="match status" value="1"/>
</dbReference>
<dbReference type="Gene3D" id="3.90.650.10">
    <property type="entry name" value="PurM-like C-terminal domain"/>
    <property type="match status" value="1"/>
</dbReference>
<dbReference type="Gene3D" id="3.30.1330.10">
    <property type="entry name" value="PurM-like, N-terminal domain"/>
    <property type="match status" value="1"/>
</dbReference>
<dbReference type="HAMAP" id="MF_00741">
    <property type="entry name" value="AIRS"/>
    <property type="match status" value="1"/>
</dbReference>
<dbReference type="InterPro" id="IPR010918">
    <property type="entry name" value="PurM-like_C_dom"/>
</dbReference>
<dbReference type="InterPro" id="IPR036676">
    <property type="entry name" value="PurM-like_C_sf"/>
</dbReference>
<dbReference type="InterPro" id="IPR016188">
    <property type="entry name" value="PurM-like_N"/>
</dbReference>
<dbReference type="InterPro" id="IPR036921">
    <property type="entry name" value="PurM-like_N_sf"/>
</dbReference>
<dbReference type="InterPro" id="IPR004733">
    <property type="entry name" value="PurM_cligase"/>
</dbReference>
<dbReference type="NCBIfam" id="TIGR00878">
    <property type="entry name" value="purM"/>
    <property type="match status" value="1"/>
</dbReference>
<dbReference type="PANTHER" id="PTHR10520:SF12">
    <property type="entry name" value="TRIFUNCTIONAL PURINE BIOSYNTHETIC PROTEIN ADENOSINE-3"/>
    <property type="match status" value="1"/>
</dbReference>
<dbReference type="PANTHER" id="PTHR10520">
    <property type="entry name" value="TRIFUNCTIONAL PURINE BIOSYNTHETIC PROTEIN ADENOSINE-3-RELATED"/>
    <property type="match status" value="1"/>
</dbReference>
<dbReference type="Pfam" id="PF00586">
    <property type="entry name" value="AIRS"/>
    <property type="match status" value="1"/>
</dbReference>
<dbReference type="Pfam" id="PF02769">
    <property type="entry name" value="AIRS_C"/>
    <property type="match status" value="1"/>
</dbReference>
<dbReference type="SUPFAM" id="SSF56042">
    <property type="entry name" value="PurM C-terminal domain-like"/>
    <property type="match status" value="1"/>
</dbReference>
<dbReference type="SUPFAM" id="SSF55326">
    <property type="entry name" value="PurM N-terminal domain-like"/>
    <property type="match status" value="1"/>
</dbReference>
<sequence>MTDRNISLTYAGAGVDIDAGNRLVDLIKPMVRATARAGAEAEIGGFGGLFDLKAAGFADPVLVAANDGVGTKVKIAIETGIHDTIGIDLVAMSVNDLVVQGAEPLFFLDYFACGKLDPETAAAIVAGIAEGCREAGCALIGGETAEMPGLYKDGDYDLAGFAVGAAERGSLLPGRDIAAGDAVIGLASSGVHSNGYSLVRNIVEASGIALSAPAPFAPVATLGGALLTPTRLYVKSCLRAIRETGAVKGLAHITGGGFTDNIPRVLPEGLGVRIDLAGLTVLPVFKWLAQQGRVVEREMLRTFNCGIGMVAIVRRDAVQQVVDVLTQAGERVSLLGDVIVAGDEGRVVYDGQLDLAV</sequence>
<accession>Q3SS83</accession>
<gene>
    <name evidence="1" type="primary">purM</name>
    <name type="ordered locus">Nwi_1597</name>
</gene>
<protein>
    <recommendedName>
        <fullName evidence="1">Phosphoribosylformylglycinamidine cyclo-ligase</fullName>
        <ecNumber evidence="1">6.3.3.1</ecNumber>
    </recommendedName>
    <alternativeName>
        <fullName evidence="1">AIR synthase</fullName>
    </alternativeName>
    <alternativeName>
        <fullName evidence="1">AIRS</fullName>
    </alternativeName>
    <alternativeName>
        <fullName evidence="1">Phosphoribosyl-aminoimidazole synthetase</fullName>
    </alternativeName>
</protein>
<reference key="1">
    <citation type="journal article" date="2006" name="Appl. Environ. Microbiol.">
        <title>Genome sequence of the chemolithoautotrophic nitrite-oxidizing bacterium Nitrobacter winogradskyi Nb-255.</title>
        <authorList>
            <person name="Starkenburg S.R."/>
            <person name="Chain P.S.G."/>
            <person name="Sayavedra-Soto L.A."/>
            <person name="Hauser L."/>
            <person name="Land M.L."/>
            <person name="Larimer F.W."/>
            <person name="Malfatti S.A."/>
            <person name="Klotz M.G."/>
            <person name="Bottomley P.J."/>
            <person name="Arp D.J."/>
            <person name="Hickey W.J."/>
        </authorList>
    </citation>
    <scope>NUCLEOTIDE SEQUENCE [LARGE SCALE GENOMIC DNA]</scope>
    <source>
        <strain>ATCC 25391 / DSM 10237 / CIP 104748 / NCIMB 11846 / Nb-255</strain>
    </source>
</reference>
<name>PUR5_NITWN</name>
<evidence type="ECO:0000255" key="1">
    <source>
        <dbReference type="HAMAP-Rule" id="MF_00741"/>
    </source>
</evidence>
<feature type="chain" id="PRO_1000148289" description="Phosphoribosylformylglycinamidine cyclo-ligase">
    <location>
        <begin position="1"/>
        <end position="357"/>
    </location>
</feature>
<proteinExistence type="inferred from homology"/>
<keyword id="KW-0067">ATP-binding</keyword>
<keyword id="KW-0963">Cytoplasm</keyword>
<keyword id="KW-0436">Ligase</keyword>
<keyword id="KW-0547">Nucleotide-binding</keyword>
<keyword id="KW-0658">Purine biosynthesis</keyword>
<keyword id="KW-1185">Reference proteome</keyword>
<comment type="catalytic activity">
    <reaction evidence="1">
        <text>2-formamido-N(1)-(5-O-phospho-beta-D-ribosyl)acetamidine + ATP = 5-amino-1-(5-phospho-beta-D-ribosyl)imidazole + ADP + phosphate + H(+)</text>
        <dbReference type="Rhea" id="RHEA:23032"/>
        <dbReference type="ChEBI" id="CHEBI:15378"/>
        <dbReference type="ChEBI" id="CHEBI:30616"/>
        <dbReference type="ChEBI" id="CHEBI:43474"/>
        <dbReference type="ChEBI" id="CHEBI:137981"/>
        <dbReference type="ChEBI" id="CHEBI:147287"/>
        <dbReference type="ChEBI" id="CHEBI:456216"/>
        <dbReference type="EC" id="6.3.3.1"/>
    </reaction>
</comment>
<comment type="pathway">
    <text evidence="1">Purine metabolism; IMP biosynthesis via de novo pathway; 5-amino-1-(5-phospho-D-ribosyl)imidazole from N(2)-formyl-N(1)-(5-phospho-D-ribosyl)glycinamide: step 2/2.</text>
</comment>
<comment type="subcellular location">
    <subcellularLocation>
        <location evidence="1">Cytoplasm</location>
    </subcellularLocation>
</comment>
<comment type="similarity">
    <text evidence="1">Belongs to the AIR synthase family.</text>
</comment>